<dbReference type="EC" id="3.4.11.1"/>
<dbReference type="EMBL" id="CP000438">
    <property type="protein sequence ID" value="ABJ12177.1"/>
    <property type="molecule type" value="Genomic_DNA"/>
</dbReference>
<dbReference type="SMR" id="Q02PA2"/>
<dbReference type="MEROPS" id="M28.008"/>
<dbReference type="iPTMnet" id="Q02PA2"/>
<dbReference type="KEGG" id="pau:PA14_26020"/>
<dbReference type="PseudoCAP" id="PA14_26020"/>
<dbReference type="HOGENOM" id="CLU_024336_0_2_6"/>
<dbReference type="BioCyc" id="PAER208963:G1G74-2171-MONOMER"/>
<dbReference type="Proteomes" id="UP000000653">
    <property type="component" value="Chromosome"/>
</dbReference>
<dbReference type="GO" id="GO:0005576">
    <property type="term" value="C:extracellular region"/>
    <property type="evidence" value="ECO:0007669"/>
    <property type="project" value="UniProtKB-SubCell"/>
</dbReference>
<dbReference type="GO" id="GO:0004177">
    <property type="term" value="F:aminopeptidase activity"/>
    <property type="evidence" value="ECO:0007669"/>
    <property type="project" value="UniProtKB-KW"/>
</dbReference>
<dbReference type="GO" id="GO:0046872">
    <property type="term" value="F:metal ion binding"/>
    <property type="evidence" value="ECO:0007669"/>
    <property type="project" value="UniProtKB-KW"/>
</dbReference>
<dbReference type="GO" id="GO:0008235">
    <property type="term" value="F:metalloexopeptidase activity"/>
    <property type="evidence" value="ECO:0007669"/>
    <property type="project" value="InterPro"/>
</dbReference>
<dbReference type="GO" id="GO:0006508">
    <property type="term" value="P:proteolysis"/>
    <property type="evidence" value="ECO:0007669"/>
    <property type="project" value="UniProtKB-KW"/>
</dbReference>
<dbReference type="CDD" id="cd03876">
    <property type="entry name" value="M28_SGAP_like"/>
    <property type="match status" value="1"/>
</dbReference>
<dbReference type="CDD" id="cd00538">
    <property type="entry name" value="PA"/>
    <property type="match status" value="1"/>
</dbReference>
<dbReference type="Gene3D" id="3.50.30.30">
    <property type="match status" value="1"/>
</dbReference>
<dbReference type="Gene3D" id="3.40.630.10">
    <property type="entry name" value="Zn peptidases"/>
    <property type="match status" value="2"/>
</dbReference>
<dbReference type="InterPro" id="IPR045175">
    <property type="entry name" value="M28_fam"/>
</dbReference>
<dbReference type="InterPro" id="IPR041756">
    <property type="entry name" value="M28_SGAP-like"/>
</dbReference>
<dbReference type="InterPro" id="IPR046450">
    <property type="entry name" value="PA_dom_sf"/>
</dbReference>
<dbReference type="InterPro" id="IPR003137">
    <property type="entry name" value="PA_domain"/>
</dbReference>
<dbReference type="InterPro" id="IPR007484">
    <property type="entry name" value="Peptidase_M28"/>
</dbReference>
<dbReference type="PANTHER" id="PTHR12147">
    <property type="entry name" value="METALLOPEPTIDASE M28 FAMILY MEMBER"/>
    <property type="match status" value="1"/>
</dbReference>
<dbReference type="PANTHER" id="PTHR12147:SF26">
    <property type="entry name" value="PEPTIDASE M28 DOMAIN-CONTAINING PROTEIN"/>
    <property type="match status" value="1"/>
</dbReference>
<dbReference type="Pfam" id="PF02225">
    <property type="entry name" value="PA"/>
    <property type="match status" value="1"/>
</dbReference>
<dbReference type="Pfam" id="PF04389">
    <property type="entry name" value="Peptidase_M28"/>
    <property type="match status" value="1"/>
</dbReference>
<dbReference type="SUPFAM" id="SSF52025">
    <property type="entry name" value="PA domain"/>
    <property type="match status" value="1"/>
</dbReference>
<dbReference type="SUPFAM" id="SSF53187">
    <property type="entry name" value="Zn-dependent exopeptidases"/>
    <property type="match status" value="1"/>
</dbReference>
<proteinExistence type="evidence at protein level"/>
<accession>Q02PA2</accession>
<name>LAP_PSEAB</name>
<gene>
    <name evidence="5" type="primary">lap</name>
    <name type="ordered locus">PA14_26020</name>
</gene>
<organism>
    <name type="scientific">Pseudomonas aeruginosa (strain UCBPP-PA14)</name>
    <dbReference type="NCBI Taxonomy" id="208963"/>
    <lineage>
        <taxon>Bacteria</taxon>
        <taxon>Pseudomonadati</taxon>
        <taxon>Pseudomonadota</taxon>
        <taxon>Gammaproteobacteria</taxon>
        <taxon>Pseudomonadales</taxon>
        <taxon>Pseudomonadaceae</taxon>
        <taxon>Pseudomonas</taxon>
    </lineage>
</organism>
<reference key="1">
    <citation type="journal article" date="2006" name="Genome Biol.">
        <title>Genomic analysis reveals that Pseudomonas aeruginosa virulence is combinatorial.</title>
        <authorList>
            <person name="Lee D.G."/>
            <person name="Urbach J.M."/>
            <person name="Wu G."/>
            <person name="Liberati N.T."/>
            <person name="Feinbaum R.L."/>
            <person name="Miyata S."/>
            <person name="Diggins L.T."/>
            <person name="He J."/>
            <person name="Saucier M."/>
            <person name="Deziel E."/>
            <person name="Friedman L."/>
            <person name="Li L."/>
            <person name="Grills G."/>
            <person name="Montgomery K."/>
            <person name="Kucherlapati R."/>
            <person name="Rahme L.G."/>
            <person name="Ausubel F.M."/>
        </authorList>
    </citation>
    <scope>NUCLEOTIDE SEQUENCE [LARGE SCALE GENOMIC DNA]</scope>
    <source>
        <strain>UCBPP-PA14</strain>
    </source>
</reference>
<reference key="2">
    <citation type="journal article" date="2014" name="Proteomics">
        <title>Extracellular Ser/Thr/Tyr phosphorylated proteins of Pseudomonas aeruginosa PA14 strain.</title>
        <authorList>
            <person name="Ouidir T."/>
            <person name="Jarnier F."/>
            <person name="Cosette P."/>
            <person name="Jouenne T."/>
            <person name="Hardouin J."/>
        </authorList>
    </citation>
    <scope>IDENTIFICATION BY MASS SPECTROMETRY</scope>
    <scope>SUBCELLULAR LOCATION</scope>
    <scope>PHOSPHORYLATION AT THR-196</scope>
    <source>
        <strain>UCBPP-PA14</strain>
    </source>
</reference>
<comment type="function">
    <text evidence="2">A secreted aminopeptidase. Acts on free N-terminal amino groups with a very strong preference for Leu in the first position.</text>
</comment>
<comment type="catalytic activity">
    <reaction>
        <text>Release of an N-terminal amino acid, Xaa-|-Yaa-, in which Xaa is preferably Leu, but may be other amino acids including Pro although not Arg or Lys, and Yaa may be Pro. Amino acid amides and methyl esters are also readily hydrolyzed, but rates on arylamides are exceedingly low.</text>
        <dbReference type="EC" id="3.4.11.1"/>
    </reaction>
</comment>
<comment type="cofactor">
    <cofactor evidence="1">
        <name>Zn(2+)</name>
        <dbReference type="ChEBI" id="CHEBI:29105"/>
    </cofactor>
    <text evidence="1">Binds 2 Zn(2+) ions per subunit.</text>
</comment>
<comment type="subcellular location">
    <subcellularLocation>
        <location evidence="4">Secreted</location>
    </subcellularLocation>
</comment>
<comment type="similarity">
    <text evidence="5">Belongs to the peptidase M28 family. M28A subfamily.</text>
</comment>
<protein>
    <recommendedName>
        <fullName>Aminopeptidase</fullName>
        <ecNumber>3.4.11.1</ecNumber>
    </recommendedName>
    <alternativeName>
        <fullName>Leucine aminopeptidase</fullName>
    </alternativeName>
    <alternativeName>
        <fullName>PaAP</fullName>
    </alternativeName>
</protein>
<sequence length="536" mass="57511">MSNKNNLRYALGALALSVSAASLAAPSEAQQFTEFWTPGKPNPSICKSPLLVSTPLGLPRCLQASNVVKRLQKLEDIASLNDGNRAAATPGYQASVDYVKQTLQKAGYKVSVQPFPFTAYYPKGPGSLSATVPQPVTYEWEKDFTYLSQTEAGDVTAKVVPVDLSLGAGNTSTSGCEAEDFANFPAGSIALIQRGTCNFEQKAENAAAAGAAGVIIFNQGNTDDRKGLENVTVGESYEGGIPVIFATYDNGVAWSQTPDLQLHLVVDVVRKKTETYNVVAETRRGNPNNVVMVGAHLDSVFEGPGINDNGSGSAAQLEMAVLLAKALPVNKVRFAWWGAEEAGLVGSTHYVQNLAPEEKKKIKAYLNFDMIGSPNFGNFIYDGDGSDFGLQGPPGSAAIERLFEAYFRLRGQQSEGTEIDFRSDYAEFFNSGIAFGGLFTGAEGLKTEEQAQKYGGTAGKAYDECYHSKCDGIANINQDALEIHSDAMAFVTSWLSLSTKVVDDEIAAAGQKAQSRSLQMQKSASQIERWGHDFIK</sequence>
<keyword id="KW-0031">Aminopeptidase</keyword>
<keyword id="KW-1015">Disulfide bond</keyword>
<keyword id="KW-0378">Hydrolase</keyword>
<keyword id="KW-0479">Metal-binding</keyword>
<keyword id="KW-0597">Phosphoprotein</keyword>
<keyword id="KW-0645">Protease</keyword>
<keyword id="KW-0964">Secreted</keyword>
<keyword id="KW-0732">Signal</keyword>
<keyword id="KW-0862">Zinc</keyword>
<keyword id="KW-0865">Zymogen</keyword>
<feature type="signal peptide" evidence="3">
    <location>
        <begin position="1"/>
        <end position="24"/>
    </location>
</feature>
<feature type="chain" id="PRO_0000431391" description="Aminopeptidase" evidence="3">
    <location>
        <begin position="25"/>
        <end position="536"/>
    </location>
</feature>
<feature type="domain" description="PA" evidence="3">
    <location>
        <begin position="152"/>
        <end position="255"/>
    </location>
</feature>
<feature type="active site" description="Proton acceptor" evidence="1">
    <location>
        <position position="340"/>
    </location>
</feature>
<feature type="binding site" evidence="1">
    <location>
        <position position="296"/>
    </location>
    <ligand>
        <name>Zn(2+)</name>
        <dbReference type="ChEBI" id="CHEBI:29105"/>
        <label>1</label>
        <note>catalytic</note>
    </ligand>
</feature>
<feature type="binding site" evidence="1">
    <location>
        <position position="308"/>
    </location>
    <ligand>
        <name>Zn(2+)</name>
        <dbReference type="ChEBI" id="CHEBI:29105"/>
        <label>1</label>
        <note>catalytic</note>
    </ligand>
</feature>
<feature type="binding site" evidence="1">
    <location>
        <position position="308"/>
    </location>
    <ligand>
        <name>Zn(2+)</name>
        <dbReference type="ChEBI" id="CHEBI:29105"/>
        <label>2</label>
        <note>catalytic</note>
    </ligand>
</feature>
<feature type="binding site" evidence="1">
    <location>
        <position position="341"/>
    </location>
    <ligand>
        <name>Zn(2+)</name>
        <dbReference type="ChEBI" id="CHEBI:29105"/>
        <label>2</label>
        <note>catalytic</note>
    </ligand>
</feature>
<feature type="binding site" evidence="1">
    <location>
        <position position="369"/>
    </location>
    <ligand>
        <name>Zn(2+)</name>
        <dbReference type="ChEBI" id="CHEBI:29105"/>
        <label>1</label>
        <note>catalytic</note>
    </ligand>
</feature>
<feature type="binding site" evidence="1">
    <location>
        <position position="467"/>
    </location>
    <ligand>
        <name>Zn(2+)</name>
        <dbReference type="ChEBI" id="CHEBI:29105"/>
        <label>2</label>
        <note>catalytic</note>
    </ligand>
</feature>
<feature type="site" description="Transition state stabilizer" evidence="1">
    <location>
        <position position="466"/>
    </location>
</feature>
<feature type="modified residue" description="Phosphothreonine" evidence="4">
    <location>
        <position position="196"/>
    </location>
</feature>
<feature type="disulfide bond" evidence="1">
    <location>
        <begin position="465"/>
        <end position="470"/>
    </location>
</feature>
<evidence type="ECO:0000250" key="1">
    <source>
        <dbReference type="UniProtKB" id="P80561"/>
    </source>
</evidence>
<evidence type="ECO:0000250" key="2">
    <source>
        <dbReference type="UniProtKB" id="Q9HZQ8"/>
    </source>
</evidence>
<evidence type="ECO:0000255" key="3"/>
<evidence type="ECO:0000269" key="4">
    <source>
    </source>
</evidence>
<evidence type="ECO:0000305" key="5"/>